<accession>Q9I6B4</accession>
<protein>
    <recommendedName>
        <fullName evidence="1">Thiazole synthase</fullName>
        <ecNumber evidence="1">2.8.1.10</ecNumber>
    </recommendedName>
</protein>
<feature type="chain" id="PRO_0000162845" description="Thiazole synthase">
    <location>
        <begin position="1"/>
        <end position="265"/>
    </location>
</feature>
<feature type="active site" description="Schiff-base intermediate with DXP" evidence="1">
    <location>
        <position position="107"/>
    </location>
</feature>
<feature type="binding site" evidence="1">
    <location>
        <position position="168"/>
    </location>
    <ligand>
        <name>1-deoxy-D-xylulose 5-phosphate</name>
        <dbReference type="ChEBI" id="CHEBI:57792"/>
    </ligand>
</feature>
<feature type="binding site" evidence="1">
    <location>
        <begin position="194"/>
        <end position="195"/>
    </location>
    <ligand>
        <name>1-deoxy-D-xylulose 5-phosphate</name>
        <dbReference type="ChEBI" id="CHEBI:57792"/>
    </ligand>
</feature>
<feature type="binding site" evidence="1">
    <location>
        <begin position="216"/>
        <end position="217"/>
    </location>
    <ligand>
        <name>1-deoxy-D-xylulose 5-phosphate</name>
        <dbReference type="ChEBI" id="CHEBI:57792"/>
    </ligand>
</feature>
<feature type="strand" evidence="2">
    <location>
        <begin position="11"/>
        <end position="13"/>
    </location>
</feature>
<feature type="strand" evidence="2">
    <location>
        <begin position="16"/>
        <end position="19"/>
    </location>
</feature>
<feature type="strand" evidence="2">
    <location>
        <begin position="22"/>
        <end position="24"/>
    </location>
</feature>
<feature type="strand" evidence="2">
    <location>
        <begin position="29"/>
        <end position="31"/>
    </location>
</feature>
<feature type="helix" evidence="2">
    <location>
        <begin position="32"/>
        <end position="41"/>
    </location>
</feature>
<feature type="strand" evidence="2">
    <location>
        <begin position="45"/>
        <end position="50"/>
    </location>
</feature>
<feature type="helix" evidence="2">
    <location>
        <begin position="51"/>
        <end position="53"/>
    </location>
</feature>
<feature type="turn" evidence="2">
    <location>
        <begin position="71"/>
        <end position="73"/>
    </location>
</feature>
<feature type="strand" evidence="2">
    <location>
        <begin position="74"/>
        <end position="79"/>
    </location>
</feature>
<feature type="helix" evidence="2">
    <location>
        <begin position="86"/>
        <end position="97"/>
    </location>
</feature>
<feature type="turn" evidence="2">
    <location>
        <begin position="98"/>
        <end position="101"/>
    </location>
</feature>
<feature type="strand" evidence="2">
    <location>
        <begin position="105"/>
        <end position="108"/>
    </location>
</feature>
<feature type="turn" evidence="2">
    <location>
        <begin position="114"/>
        <end position="116"/>
    </location>
</feature>
<feature type="helix" evidence="2">
    <location>
        <begin position="121"/>
        <end position="132"/>
    </location>
</feature>
<feature type="turn" evidence="2">
    <location>
        <begin position="133"/>
        <end position="135"/>
    </location>
</feature>
<feature type="strand" evidence="2">
    <location>
        <begin position="137"/>
        <end position="142"/>
    </location>
</feature>
<feature type="helix" evidence="2">
    <location>
        <begin position="146"/>
        <end position="154"/>
    </location>
</feature>
<feature type="strand" evidence="2">
    <location>
        <begin position="158"/>
        <end position="162"/>
    </location>
</feature>
<feature type="strand" evidence="2">
    <location>
        <begin position="164"/>
        <end position="166"/>
    </location>
</feature>
<feature type="helix" evidence="2">
    <location>
        <begin position="176"/>
        <end position="185"/>
    </location>
</feature>
<feature type="strand" evidence="2">
    <location>
        <begin position="190"/>
        <end position="194"/>
    </location>
</feature>
<feature type="helix" evidence="2">
    <location>
        <begin position="199"/>
        <end position="208"/>
    </location>
</feature>
<feature type="strand" evidence="2">
    <location>
        <begin position="211"/>
        <end position="216"/>
    </location>
</feature>
<feature type="helix" evidence="2">
    <location>
        <begin position="217"/>
        <end position="220"/>
    </location>
</feature>
<feature type="strand" evidence="2">
    <location>
        <begin position="222"/>
        <end position="224"/>
    </location>
</feature>
<feature type="helix" evidence="2">
    <location>
        <begin position="225"/>
        <end position="245"/>
    </location>
</feature>
<organism>
    <name type="scientific">Pseudomonas aeruginosa (strain ATCC 15692 / DSM 22644 / CIP 104116 / JCM 14847 / LMG 12228 / 1C / PRS 101 / PAO1)</name>
    <dbReference type="NCBI Taxonomy" id="208964"/>
    <lineage>
        <taxon>Bacteria</taxon>
        <taxon>Pseudomonadati</taxon>
        <taxon>Pseudomonadota</taxon>
        <taxon>Gammaproteobacteria</taxon>
        <taxon>Pseudomonadales</taxon>
        <taxon>Pseudomonadaceae</taxon>
        <taxon>Pseudomonas</taxon>
    </lineage>
</organism>
<comment type="function">
    <text evidence="1">Catalyzes the rearrangement of 1-deoxy-D-xylulose 5-phosphate (DXP) to produce the thiazole phosphate moiety of thiamine. Sulfur is provided by the thiocarboxylate moiety of the carrier protein ThiS. In vitro, sulfur can be provided by H(2)S.</text>
</comment>
<comment type="catalytic activity">
    <reaction evidence="1">
        <text>[ThiS sulfur-carrier protein]-C-terminal-Gly-aminoethanethioate + 2-iminoacetate + 1-deoxy-D-xylulose 5-phosphate = [ThiS sulfur-carrier protein]-C-terminal Gly-Gly + 2-[(2R,5Z)-2-carboxy-4-methylthiazol-5(2H)-ylidene]ethyl phosphate + 2 H2O + H(+)</text>
        <dbReference type="Rhea" id="RHEA:26297"/>
        <dbReference type="Rhea" id="RHEA-COMP:12909"/>
        <dbReference type="Rhea" id="RHEA-COMP:19908"/>
        <dbReference type="ChEBI" id="CHEBI:15377"/>
        <dbReference type="ChEBI" id="CHEBI:15378"/>
        <dbReference type="ChEBI" id="CHEBI:57792"/>
        <dbReference type="ChEBI" id="CHEBI:62899"/>
        <dbReference type="ChEBI" id="CHEBI:77846"/>
        <dbReference type="ChEBI" id="CHEBI:90778"/>
        <dbReference type="ChEBI" id="CHEBI:232372"/>
        <dbReference type="EC" id="2.8.1.10"/>
    </reaction>
</comment>
<comment type="pathway">
    <text evidence="1">Cofactor biosynthesis; thiamine diphosphate biosynthesis.</text>
</comment>
<comment type="subunit">
    <text evidence="1">Homotetramer. Forms heterodimers with either ThiH or ThiS.</text>
</comment>
<comment type="subcellular location">
    <subcellularLocation>
        <location evidence="1">Cytoplasm</location>
    </subcellularLocation>
</comment>
<comment type="similarity">
    <text evidence="1">Belongs to the ThiG family.</text>
</comment>
<reference key="1">
    <citation type="journal article" date="2000" name="Nature">
        <title>Complete genome sequence of Pseudomonas aeruginosa PAO1, an opportunistic pathogen.</title>
        <authorList>
            <person name="Stover C.K."/>
            <person name="Pham X.-Q.T."/>
            <person name="Erwin A.L."/>
            <person name="Mizoguchi S.D."/>
            <person name="Warrener P."/>
            <person name="Hickey M.J."/>
            <person name="Brinkman F.S.L."/>
            <person name="Hufnagle W.O."/>
            <person name="Kowalik D.J."/>
            <person name="Lagrou M."/>
            <person name="Garber R.L."/>
            <person name="Goltry L."/>
            <person name="Tolentino E."/>
            <person name="Westbrock-Wadman S."/>
            <person name="Yuan Y."/>
            <person name="Brody L.L."/>
            <person name="Coulter S.N."/>
            <person name="Folger K.R."/>
            <person name="Kas A."/>
            <person name="Larbig K."/>
            <person name="Lim R.M."/>
            <person name="Smith K.A."/>
            <person name="Spencer D.H."/>
            <person name="Wong G.K.-S."/>
            <person name="Wu Z."/>
            <person name="Paulsen I.T."/>
            <person name="Reizer J."/>
            <person name="Saier M.H. Jr."/>
            <person name="Hancock R.E.W."/>
            <person name="Lory S."/>
            <person name="Olson M.V."/>
        </authorList>
    </citation>
    <scope>NUCLEOTIDE SEQUENCE [LARGE SCALE GENOMIC DNA]</scope>
    <source>
        <strain>ATCC 15692 / DSM 22644 / CIP 104116 / JCM 14847 / LMG 12228 / 1C / PRS 101 / PAO1</strain>
    </source>
</reference>
<reference key="2">
    <citation type="submission" date="2009-02" db="PDB data bank">
        <title>Crystal structure of thiamine biosynthesis protein from Pseudomonas aeruginosa.</title>
        <authorList>
            <consortium name="New York structural genomics research consortium (NYSGRC)"/>
        </authorList>
    </citation>
    <scope>X-RAY CRYSTALLOGRAPHY (2.9 ANGSTROMS)</scope>
</reference>
<evidence type="ECO:0000255" key="1">
    <source>
        <dbReference type="HAMAP-Rule" id="MF_00443"/>
    </source>
</evidence>
<evidence type="ECO:0007829" key="2">
    <source>
        <dbReference type="PDB" id="1WV2"/>
    </source>
</evidence>
<name>THIG_PSEAE</name>
<dbReference type="EC" id="2.8.1.10" evidence="1"/>
<dbReference type="EMBL" id="AE004091">
    <property type="protein sequence ID" value="AAG03770.1"/>
    <property type="molecule type" value="Genomic_DNA"/>
</dbReference>
<dbReference type="PIR" id="E83599">
    <property type="entry name" value="E83599"/>
</dbReference>
<dbReference type="RefSeq" id="NP_249072.1">
    <property type="nucleotide sequence ID" value="NC_002516.2"/>
</dbReference>
<dbReference type="RefSeq" id="WP_003084517.1">
    <property type="nucleotide sequence ID" value="NZ_QZGE01000016.1"/>
</dbReference>
<dbReference type="PDB" id="1WV2">
    <property type="method" value="X-ray"/>
    <property type="resolution" value="2.90 A"/>
    <property type="chains" value="A/B=1-265"/>
</dbReference>
<dbReference type="PDBsum" id="1WV2"/>
<dbReference type="SMR" id="Q9I6B4"/>
<dbReference type="FunCoup" id="Q9I6B4">
    <property type="interactions" value="430"/>
</dbReference>
<dbReference type="STRING" id="208964.PA0381"/>
<dbReference type="PaxDb" id="208964-PA0381"/>
<dbReference type="DNASU" id="879802"/>
<dbReference type="GeneID" id="879802"/>
<dbReference type="KEGG" id="pae:PA0381"/>
<dbReference type="PATRIC" id="fig|208964.12.peg.401"/>
<dbReference type="PseudoCAP" id="PA0381"/>
<dbReference type="HOGENOM" id="CLU_062233_1_1_6"/>
<dbReference type="InParanoid" id="Q9I6B4"/>
<dbReference type="OrthoDB" id="9805935at2"/>
<dbReference type="PhylomeDB" id="Q9I6B4"/>
<dbReference type="BioCyc" id="PAER208964:G1FZ6-385-MONOMER"/>
<dbReference type="UniPathway" id="UPA00060"/>
<dbReference type="EvolutionaryTrace" id="Q9I6B4"/>
<dbReference type="Proteomes" id="UP000002438">
    <property type="component" value="Chromosome"/>
</dbReference>
<dbReference type="GO" id="GO:1902508">
    <property type="term" value="C:2-iminoacetate synthase complex"/>
    <property type="evidence" value="ECO:0000318"/>
    <property type="project" value="GO_Central"/>
</dbReference>
<dbReference type="GO" id="GO:0005737">
    <property type="term" value="C:cytoplasm"/>
    <property type="evidence" value="ECO:0007669"/>
    <property type="project" value="UniProtKB-SubCell"/>
</dbReference>
<dbReference type="GO" id="GO:1990107">
    <property type="term" value="F:thiazole synthase activity"/>
    <property type="evidence" value="ECO:0007669"/>
    <property type="project" value="UniProtKB-EC"/>
</dbReference>
<dbReference type="GO" id="GO:0009228">
    <property type="term" value="P:thiamine biosynthetic process"/>
    <property type="evidence" value="ECO:0000318"/>
    <property type="project" value="GO_Central"/>
</dbReference>
<dbReference type="GO" id="GO:0009229">
    <property type="term" value="P:thiamine diphosphate biosynthetic process"/>
    <property type="evidence" value="ECO:0000318"/>
    <property type="project" value="GO_Central"/>
</dbReference>
<dbReference type="CDD" id="cd04728">
    <property type="entry name" value="ThiG"/>
    <property type="match status" value="1"/>
</dbReference>
<dbReference type="Gene3D" id="3.20.20.70">
    <property type="entry name" value="Aldolase class I"/>
    <property type="match status" value="1"/>
</dbReference>
<dbReference type="HAMAP" id="MF_00443">
    <property type="entry name" value="ThiG"/>
    <property type="match status" value="1"/>
</dbReference>
<dbReference type="InterPro" id="IPR013785">
    <property type="entry name" value="Aldolase_TIM"/>
</dbReference>
<dbReference type="InterPro" id="IPR033983">
    <property type="entry name" value="Thiazole_synthase_ThiG"/>
</dbReference>
<dbReference type="InterPro" id="IPR008867">
    <property type="entry name" value="ThiG"/>
</dbReference>
<dbReference type="PANTHER" id="PTHR34266">
    <property type="entry name" value="THIAZOLE SYNTHASE"/>
    <property type="match status" value="1"/>
</dbReference>
<dbReference type="PANTHER" id="PTHR34266:SF2">
    <property type="entry name" value="THIAZOLE SYNTHASE"/>
    <property type="match status" value="1"/>
</dbReference>
<dbReference type="Pfam" id="PF05690">
    <property type="entry name" value="ThiG"/>
    <property type="match status" value="1"/>
</dbReference>
<dbReference type="SUPFAM" id="SSF110399">
    <property type="entry name" value="ThiG-like"/>
    <property type="match status" value="1"/>
</dbReference>
<proteinExistence type="evidence at protein level"/>
<sequence length="265" mass="28235">MSQASSTDTPFVIAGRTYGSRLLVGTGKYKDLDETRRAIEASGAEIVTVAVRRTNIGQNPDEPNLLDVIPPDRYTILPNTAGCYDAVEAVRTCRLARELLDGHNLVKLEVLADQKTLFPNVVETLKAAEQLVKDGFDVMVYTSDDPIIARQLAEIGCIAVMPLAGLIGSGLGICNPYNLRIILEEAKVPVLVDAGVGTASDAAIAMELGCEAVLMNTAIAHAKDPVMMAEAMKHAIVAGRLAYLAGRMPRKLYASASSPLDGLID</sequence>
<keyword id="KW-0002">3D-structure</keyword>
<keyword id="KW-0963">Cytoplasm</keyword>
<keyword id="KW-1185">Reference proteome</keyword>
<keyword id="KW-0704">Schiff base</keyword>
<keyword id="KW-0784">Thiamine biosynthesis</keyword>
<keyword id="KW-0808">Transferase</keyword>
<gene>
    <name evidence="1" type="primary">thiG</name>
    <name type="ordered locus">PA0381</name>
</gene>